<dbReference type="EC" id="4.2.1.10" evidence="1"/>
<dbReference type="EMBL" id="CP001392">
    <property type="protein sequence ID" value="ACM33559.1"/>
    <property type="molecule type" value="Genomic_DNA"/>
</dbReference>
<dbReference type="RefSeq" id="WP_015913582.1">
    <property type="nucleotide sequence ID" value="NC_011992.1"/>
</dbReference>
<dbReference type="SMR" id="B9MAV8"/>
<dbReference type="KEGG" id="dia:Dtpsy_2104"/>
<dbReference type="eggNOG" id="COG0757">
    <property type="taxonomic scope" value="Bacteria"/>
</dbReference>
<dbReference type="HOGENOM" id="CLU_090968_2_0_4"/>
<dbReference type="UniPathway" id="UPA00053">
    <property type="reaction ID" value="UER00086"/>
</dbReference>
<dbReference type="Proteomes" id="UP000000450">
    <property type="component" value="Chromosome"/>
</dbReference>
<dbReference type="GO" id="GO:0003855">
    <property type="term" value="F:3-dehydroquinate dehydratase activity"/>
    <property type="evidence" value="ECO:0007669"/>
    <property type="project" value="UniProtKB-UniRule"/>
</dbReference>
<dbReference type="GO" id="GO:0008652">
    <property type="term" value="P:amino acid biosynthetic process"/>
    <property type="evidence" value="ECO:0007669"/>
    <property type="project" value="UniProtKB-KW"/>
</dbReference>
<dbReference type="GO" id="GO:0009073">
    <property type="term" value="P:aromatic amino acid family biosynthetic process"/>
    <property type="evidence" value="ECO:0007669"/>
    <property type="project" value="UniProtKB-KW"/>
</dbReference>
<dbReference type="GO" id="GO:0009423">
    <property type="term" value="P:chorismate biosynthetic process"/>
    <property type="evidence" value="ECO:0007669"/>
    <property type="project" value="UniProtKB-UniRule"/>
</dbReference>
<dbReference type="GO" id="GO:0019631">
    <property type="term" value="P:quinate catabolic process"/>
    <property type="evidence" value="ECO:0007669"/>
    <property type="project" value="TreeGrafter"/>
</dbReference>
<dbReference type="CDD" id="cd00466">
    <property type="entry name" value="DHQase_II"/>
    <property type="match status" value="1"/>
</dbReference>
<dbReference type="Gene3D" id="3.40.50.9100">
    <property type="entry name" value="Dehydroquinase, class II"/>
    <property type="match status" value="1"/>
</dbReference>
<dbReference type="HAMAP" id="MF_00169">
    <property type="entry name" value="AroQ"/>
    <property type="match status" value="1"/>
</dbReference>
<dbReference type="InterPro" id="IPR001874">
    <property type="entry name" value="DHquinase_II"/>
</dbReference>
<dbReference type="InterPro" id="IPR018509">
    <property type="entry name" value="DHquinase_II_CS"/>
</dbReference>
<dbReference type="InterPro" id="IPR036441">
    <property type="entry name" value="DHquinase_II_sf"/>
</dbReference>
<dbReference type="NCBIfam" id="TIGR01088">
    <property type="entry name" value="aroQ"/>
    <property type="match status" value="1"/>
</dbReference>
<dbReference type="NCBIfam" id="NF003805">
    <property type="entry name" value="PRK05395.1-2"/>
    <property type="match status" value="1"/>
</dbReference>
<dbReference type="NCBIfam" id="NF003806">
    <property type="entry name" value="PRK05395.1-3"/>
    <property type="match status" value="1"/>
</dbReference>
<dbReference type="NCBIfam" id="NF003807">
    <property type="entry name" value="PRK05395.1-4"/>
    <property type="match status" value="1"/>
</dbReference>
<dbReference type="PANTHER" id="PTHR21272">
    <property type="entry name" value="CATABOLIC 3-DEHYDROQUINASE"/>
    <property type="match status" value="1"/>
</dbReference>
<dbReference type="PANTHER" id="PTHR21272:SF3">
    <property type="entry name" value="CATABOLIC 3-DEHYDROQUINASE"/>
    <property type="match status" value="1"/>
</dbReference>
<dbReference type="Pfam" id="PF01220">
    <property type="entry name" value="DHquinase_II"/>
    <property type="match status" value="1"/>
</dbReference>
<dbReference type="PIRSF" id="PIRSF001399">
    <property type="entry name" value="DHquinase_II"/>
    <property type="match status" value="1"/>
</dbReference>
<dbReference type="SUPFAM" id="SSF52304">
    <property type="entry name" value="Type II 3-dehydroquinate dehydratase"/>
    <property type="match status" value="1"/>
</dbReference>
<dbReference type="PROSITE" id="PS01029">
    <property type="entry name" value="DEHYDROQUINASE_II"/>
    <property type="match status" value="1"/>
</dbReference>
<organism>
    <name type="scientific">Acidovorax ebreus (strain TPSY)</name>
    <name type="common">Diaphorobacter sp. (strain TPSY)</name>
    <dbReference type="NCBI Taxonomy" id="535289"/>
    <lineage>
        <taxon>Bacteria</taxon>
        <taxon>Pseudomonadati</taxon>
        <taxon>Pseudomonadota</taxon>
        <taxon>Betaproteobacteria</taxon>
        <taxon>Burkholderiales</taxon>
        <taxon>Comamonadaceae</taxon>
        <taxon>Diaphorobacter</taxon>
    </lineage>
</organism>
<reference key="1">
    <citation type="submission" date="2009-01" db="EMBL/GenBank/DDBJ databases">
        <title>Complete sequence of Diaphorobacter sp. TPSY.</title>
        <authorList>
            <consortium name="US DOE Joint Genome Institute"/>
            <person name="Lucas S."/>
            <person name="Copeland A."/>
            <person name="Lapidus A."/>
            <person name="Glavina del Rio T."/>
            <person name="Tice H."/>
            <person name="Bruce D."/>
            <person name="Goodwin L."/>
            <person name="Pitluck S."/>
            <person name="Chertkov O."/>
            <person name="Brettin T."/>
            <person name="Detter J.C."/>
            <person name="Han C."/>
            <person name="Larimer F."/>
            <person name="Land M."/>
            <person name="Hauser L."/>
            <person name="Kyrpides N."/>
            <person name="Mikhailova N."/>
            <person name="Coates J.D."/>
        </authorList>
    </citation>
    <scope>NUCLEOTIDE SEQUENCE [LARGE SCALE GENOMIC DNA]</scope>
    <source>
        <strain>TPSY</strain>
    </source>
</reference>
<protein>
    <recommendedName>
        <fullName evidence="1">3-dehydroquinate dehydratase</fullName>
        <shortName evidence="1">3-dehydroquinase</shortName>
        <ecNumber evidence="1">4.2.1.10</ecNumber>
    </recommendedName>
    <alternativeName>
        <fullName evidence="1">Type II DHQase</fullName>
    </alternativeName>
</protein>
<feature type="chain" id="PRO_1000123689" description="3-dehydroquinate dehydratase">
    <location>
        <begin position="1"/>
        <end position="148"/>
    </location>
</feature>
<feature type="active site" description="Proton acceptor" evidence="1">
    <location>
        <position position="24"/>
    </location>
</feature>
<feature type="active site" description="Proton donor" evidence="1">
    <location>
        <position position="106"/>
    </location>
</feature>
<feature type="binding site" evidence="1">
    <location>
        <position position="80"/>
    </location>
    <ligand>
        <name>substrate</name>
    </ligand>
</feature>
<feature type="binding site" evidence="1">
    <location>
        <position position="86"/>
    </location>
    <ligand>
        <name>substrate</name>
    </ligand>
</feature>
<feature type="binding site" evidence="1">
    <location>
        <position position="93"/>
    </location>
    <ligand>
        <name>substrate</name>
    </ligand>
</feature>
<feature type="binding site" evidence="1">
    <location>
        <begin position="107"/>
        <end position="108"/>
    </location>
    <ligand>
        <name>substrate</name>
    </ligand>
</feature>
<feature type="binding site" evidence="1">
    <location>
        <position position="117"/>
    </location>
    <ligand>
        <name>substrate</name>
    </ligand>
</feature>
<feature type="site" description="Transition state stabilizer" evidence="1">
    <location>
        <position position="19"/>
    </location>
</feature>
<keyword id="KW-0028">Amino-acid biosynthesis</keyword>
<keyword id="KW-0057">Aromatic amino acid biosynthesis</keyword>
<keyword id="KW-0456">Lyase</keyword>
<keyword id="KW-1185">Reference proteome</keyword>
<proteinExistence type="inferred from homology"/>
<sequence>MTKTVYVLNGPNLNLLGTREPQVYGSQTLADVEQLCTAACARHGLALVFRQSNHEGALVDWIHEASRLHAAGQLAGVVLNAAAYTHTSVALLDAVKGTGVPVVELHISNVHARESFRHHSYLAGAARAVMCGFGVQGYALAIDGLAQW</sequence>
<gene>
    <name evidence="1" type="primary">aroQ</name>
    <name type="ordered locus">Dtpsy_2104</name>
</gene>
<comment type="function">
    <text evidence="1">Catalyzes a trans-dehydration via an enolate intermediate.</text>
</comment>
<comment type="catalytic activity">
    <reaction evidence="1">
        <text>3-dehydroquinate = 3-dehydroshikimate + H2O</text>
        <dbReference type="Rhea" id="RHEA:21096"/>
        <dbReference type="ChEBI" id="CHEBI:15377"/>
        <dbReference type="ChEBI" id="CHEBI:16630"/>
        <dbReference type="ChEBI" id="CHEBI:32364"/>
        <dbReference type="EC" id="4.2.1.10"/>
    </reaction>
</comment>
<comment type="pathway">
    <text evidence="1">Metabolic intermediate biosynthesis; chorismate biosynthesis; chorismate from D-erythrose 4-phosphate and phosphoenolpyruvate: step 3/7.</text>
</comment>
<comment type="subunit">
    <text evidence="1">Homododecamer.</text>
</comment>
<comment type="similarity">
    <text evidence="1">Belongs to the type-II 3-dehydroquinase family.</text>
</comment>
<name>AROQ_ACIET</name>
<accession>B9MAV8</accession>
<evidence type="ECO:0000255" key="1">
    <source>
        <dbReference type="HAMAP-Rule" id="MF_00169"/>
    </source>
</evidence>